<dbReference type="EMBL" id="AE007870">
    <property type="protein sequence ID" value="AAK88844.1"/>
    <property type="status" value="ALT_INIT"/>
    <property type="molecule type" value="Genomic_DNA"/>
</dbReference>
<dbReference type="RefSeq" id="NP_356059.1">
    <property type="nucleotide sequence ID" value="NC_003063.2"/>
</dbReference>
<dbReference type="STRING" id="176299.Atu4601"/>
<dbReference type="EnsemblBacteria" id="AAK88844">
    <property type="protein sequence ID" value="AAK88844"/>
    <property type="gene ID" value="Atu4601"/>
</dbReference>
<dbReference type="KEGG" id="atu:Atu4601"/>
<dbReference type="eggNOG" id="COG2801">
    <property type="taxonomic scope" value="Bacteria"/>
</dbReference>
<dbReference type="HOGENOM" id="CLU_052819_0_0_5"/>
<dbReference type="OrthoDB" id="8080802at2"/>
<dbReference type="Proteomes" id="UP000000813">
    <property type="component" value="Chromosome linear"/>
</dbReference>
<dbReference type="GO" id="GO:0003676">
    <property type="term" value="F:nucleic acid binding"/>
    <property type="evidence" value="ECO:0007669"/>
    <property type="project" value="InterPro"/>
</dbReference>
<dbReference type="GO" id="GO:0015074">
    <property type="term" value="P:DNA integration"/>
    <property type="evidence" value="ECO:0007669"/>
    <property type="project" value="InterPro"/>
</dbReference>
<dbReference type="Gene3D" id="3.30.420.10">
    <property type="entry name" value="Ribonuclease H-like superfamily/Ribonuclease H"/>
    <property type="match status" value="1"/>
</dbReference>
<dbReference type="InterPro" id="IPR001584">
    <property type="entry name" value="Integrase_cat-core"/>
</dbReference>
<dbReference type="InterPro" id="IPR012337">
    <property type="entry name" value="RNaseH-like_sf"/>
</dbReference>
<dbReference type="InterPro" id="IPR036397">
    <property type="entry name" value="RNaseH_sf"/>
</dbReference>
<dbReference type="InterPro" id="IPR050900">
    <property type="entry name" value="Transposase_IS3/IS150/IS904"/>
</dbReference>
<dbReference type="PANTHER" id="PTHR46889">
    <property type="entry name" value="TRANSPOSASE INSF FOR INSERTION SEQUENCE IS3B-RELATED"/>
    <property type="match status" value="1"/>
</dbReference>
<dbReference type="PANTHER" id="PTHR46889:SF4">
    <property type="entry name" value="TRANSPOSASE INSO FOR INSERTION SEQUENCE ELEMENT IS911B-RELATED"/>
    <property type="match status" value="1"/>
</dbReference>
<dbReference type="Pfam" id="PF00665">
    <property type="entry name" value="rve"/>
    <property type="match status" value="1"/>
</dbReference>
<dbReference type="SUPFAM" id="SSF53098">
    <property type="entry name" value="Ribonuclease H-like"/>
    <property type="match status" value="1"/>
</dbReference>
<dbReference type="PROSITE" id="PS50994">
    <property type="entry name" value="INTEGRASE"/>
    <property type="match status" value="1"/>
</dbReference>
<feature type="chain" id="PRO_0000075515" description="Insertion element IS136 uncharacterized protein Atu4601">
    <location>
        <begin position="1"/>
        <end position="195"/>
    </location>
</feature>
<feature type="domain" description="Integrase catalytic" evidence="1">
    <location>
        <begin position="25"/>
        <end position="194"/>
    </location>
</feature>
<reference key="1">
    <citation type="journal article" date="2001" name="Science">
        <title>The genome of the natural genetic engineer Agrobacterium tumefaciens C58.</title>
        <authorList>
            <person name="Wood D.W."/>
            <person name="Setubal J.C."/>
            <person name="Kaul R."/>
            <person name="Monks D.E."/>
            <person name="Kitajima J.P."/>
            <person name="Okura V.K."/>
            <person name="Zhou Y."/>
            <person name="Chen L."/>
            <person name="Wood G.E."/>
            <person name="Almeida N.F. Jr."/>
            <person name="Woo L."/>
            <person name="Chen Y."/>
            <person name="Paulsen I.T."/>
            <person name="Eisen J.A."/>
            <person name="Karp P.D."/>
            <person name="Bovee D. Sr."/>
            <person name="Chapman P."/>
            <person name="Clendenning J."/>
            <person name="Deatherage G."/>
            <person name="Gillet W."/>
            <person name="Grant C."/>
            <person name="Kutyavin T."/>
            <person name="Levy R."/>
            <person name="Li M.-J."/>
            <person name="McClelland E."/>
            <person name="Palmieri A."/>
            <person name="Raymond C."/>
            <person name="Rouse G."/>
            <person name="Saenphimmachak C."/>
            <person name="Wu Z."/>
            <person name="Romero P."/>
            <person name="Gordon D."/>
            <person name="Zhang S."/>
            <person name="Yoo H."/>
            <person name="Tao Y."/>
            <person name="Biddle P."/>
            <person name="Jung M."/>
            <person name="Krespan W."/>
            <person name="Perry M."/>
            <person name="Gordon-Kamm B."/>
            <person name="Liao L."/>
            <person name="Kim S."/>
            <person name="Hendrick C."/>
            <person name="Zhao Z.-Y."/>
            <person name="Dolan M."/>
            <person name="Chumley F."/>
            <person name="Tingey S.V."/>
            <person name="Tomb J.-F."/>
            <person name="Gordon M.P."/>
            <person name="Olson M.V."/>
            <person name="Nester E.W."/>
        </authorList>
    </citation>
    <scope>NUCLEOTIDE SEQUENCE [LARGE SCALE GENOMIC DNA]</scope>
    <source>
        <strain>C58 / ATCC 33970</strain>
    </source>
</reference>
<reference key="2">
    <citation type="journal article" date="2001" name="Science">
        <title>Genome sequence of the plant pathogen and biotechnology agent Agrobacterium tumefaciens C58.</title>
        <authorList>
            <person name="Goodner B."/>
            <person name="Hinkle G."/>
            <person name="Gattung S."/>
            <person name="Miller N."/>
            <person name="Blanchard M."/>
            <person name="Qurollo B."/>
            <person name="Goldman B.S."/>
            <person name="Cao Y."/>
            <person name="Askenazi M."/>
            <person name="Halling C."/>
            <person name="Mullin L."/>
            <person name="Houmiel K."/>
            <person name="Gordon J."/>
            <person name="Vaudin M."/>
            <person name="Iartchouk O."/>
            <person name="Epp A."/>
            <person name="Liu F."/>
            <person name="Wollam C."/>
            <person name="Allinger M."/>
            <person name="Doughty D."/>
            <person name="Scott C."/>
            <person name="Lappas C."/>
            <person name="Markelz B."/>
            <person name="Flanagan C."/>
            <person name="Crowell C."/>
            <person name="Gurson J."/>
            <person name="Lomo C."/>
            <person name="Sear C."/>
            <person name="Strub G."/>
            <person name="Cielo C."/>
            <person name="Slater S."/>
        </authorList>
    </citation>
    <scope>NUCLEOTIDE SEQUENCE [LARGE SCALE GENOMIC DNA]</scope>
    <source>
        <strain>C58 / ATCC 33970</strain>
    </source>
</reference>
<protein>
    <recommendedName>
        <fullName>Insertion element IS136 uncharacterized protein Atu4601</fullName>
    </recommendedName>
</protein>
<organism>
    <name type="scientific">Agrobacterium fabrum (strain C58 / ATCC 33970)</name>
    <name type="common">Agrobacterium tumefaciens (strain C58)</name>
    <dbReference type="NCBI Taxonomy" id="176299"/>
    <lineage>
        <taxon>Bacteria</taxon>
        <taxon>Pseudomonadati</taxon>
        <taxon>Pseudomonadota</taxon>
        <taxon>Alphaproteobacteria</taxon>
        <taxon>Hyphomicrobiales</taxon>
        <taxon>Rhizobiaceae</taxon>
        <taxon>Rhizobium/Agrobacterium group</taxon>
        <taxon>Agrobacterium</taxon>
        <taxon>Agrobacterium tumefaciens complex</taxon>
    </lineage>
</organism>
<evidence type="ECO:0000255" key="1">
    <source>
        <dbReference type="PROSITE-ProRule" id="PRU00457"/>
    </source>
</evidence>
<evidence type="ECO:0000305" key="2"/>
<sequence>MGNHAMLLEKHTAVRKGRLHDGKVMVMRSNLRWCSDGLEFACWNGEVIRLAFIIDAFDREIIAWTAVANAGISGSDVRDMMLEAVEKRFHATRAPHAIEHLSDNGSAYTARDTRLFAQALNLTPCFTPVASPQSNGMSEAFVKTLKRDYIRISALPDAQTALRLIDGWIEDYNEIHPHSALKMASPRQFIRAKSI</sequence>
<name>Y4601_AGRFC</name>
<gene>
    <name type="ordered locus">Atu4601</name>
    <name type="ORF">AGR_L_551</name>
</gene>
<accession>P0A3L3</accession>
<accession>P05681</accession>
<keyword id="KW-1185">Reference proteome</keyword>
<keyword id="KW-0814">Transposable element</keyword>
<proteinExistence type="predicted"/>
<comment type="sequence caution" evidence="2">
    <conflict type="erroneous initiation">
        <sequence resource="EMBL-CDS" id="AAK88844"/>
    </conflict>
</comment>